<accession>Q7U6V9</accession>
<name>SYFB_PARMW</name>
<proteinExistence type="inferred from homology"/>
<gene>
    <name evidence="1" type="primary">pheT</name>
    <name type="ordered locus">SYNW1227</name>
</gene>
<dbReference type="EC" id="6.1.1.20" evidence="1"/>
<dbReference type="EMBL" id="BX569692">
    <property type="protein sequence ID" value="CAE07742.1"/>
    <property type="molecule type" value="Genomic_DNA"/>
</dbReference>
<dbReference type="RefSeq" id="WP_011128091.1">
    <property type="nucleotide sequence ID" value="NC_005070.1"/>
</dbReference>
<dbReference type="SMR" id="Q7U6V9"/>
<dbReference type="STRING" id="84588.SYNW1227"/>
<dbReference type="KEGG" id="syw:SYNW1227"/>
<dbReference type="eggNOG" id="COG0072">
    <property type="taxonomic scope" value="Bacteria"/>
</dbReference>
<dbReference type="eggNOG" id="COG0073">
    <property type="taxonomic scope" value="Bacteria"/>
</dbReference>
<dbReference type="HOGENOM" id="CLU_016891_0_0_3"/>
<dbReference type="Proteomes" id="UP000001422">
    <property type="component" value="Chromosome"/>
</dbReference>
<dbReference type="GO" id="GO:0009328">
    <property type="term" value="C:phenylalanine-tRNA ligase complex"/>
    <property type="evidence" value="ECO:0007669"/>
    <property type="project" value="TreeGrafter"/>
</dbReference>
<dbReference type="GO" id="GO:0005524">
    <property type="term" value="F:ATP binding"/>
    <property type="evidence" value="ECO:0007669"/>
    <property type="project" value="UniProtKB-UniRule"/>
</dbReference>
<dbReference type="GO" id="GO:0000287">
    <property type="term" value="F:magnesium ion binding"/>
    <property type="evidence" value="ECO:0007669"/>
    <property type="project" value="UniProtKB-UniRule"/>
</dbReference>
<dbReference type="GO" id="GO:0004826">
    <property type="term" value="F:phenylalanine-tRNA ligase activity"/>
    <property type="evidence" value="ECO:0007669"/>
    <property type="project" value="UniProtKB-UniRule"/>
</dbReference>
<dbReference type="GO" id="GO:0000049">
    <property type="term" value="F:tRNA binding"/>
    <property type="evidence" value="ECO:0007669"/>
    <property type="project" value="UniProtKB-KW"/>
</dbReference>
<dbReference type="GO" id="GO:0006432">
    <property type="term" value="P:phenylalanyl-tRNA aminoacylation"/>
    <property type="evidence" value="ECO:0007669"/>
    <property type="project" value="UniProtKB-UniRule"/>
</dbReference>
<dbReference type="CDD" id="cd00769">
    <property type="entry name" value="PheRS_beta_core"/>
    <property type="match status" value="1"/>
</dbReference>
<dbReference type="CDD" id="cd02796">
    <property type="entry name" value="tRNA_bind_bactPheRS"/>
    <property type="match status" value="1"/>
</dbReference>
<dbReference type="FunFam" id="2.40.50.140:FF:000045">
    <property type="entry name" value="Phenylalanine--tRNA ligase beta subunit"/>
    <property type="match status" value="1"/>
</dbReference>
<dbReference type="FunFam" id="3.30.70.380:FF:000001">
    <property type="entry name" value="Phenylalanine--tRNA ligase beta subunit"/>
    <property type="match status" value="1"/>
</dbReference>
<dbReference type="Gene3D" id="3.30.56.10">
    <property type="match status" value="2"/>
</dbReference>
<dbReference type="Gene3D" id="3.30.930.10">
    <property type="entry name" value="Bira Bifunctional Protein, Domain 2"/>
    <property type="match status" value="1"/>
</dbReference>
<dbReference type="Gene3D" id="3.30.70.380">
    <property type="entry name" value="Ferrodoxin-fold anticodon-binding domain"/>
    <property type="match status" value="1"/>
</dbReference>
<dbReference type="Gene3D" id="2.40.50.140">
    <property type="entry name" value="Nucleic acid-binding proteins"/>
    <property type="match status" value="1"/>
</dbReference>
<dbReference type="Gene3D" id="3.50.40.10">
    <property type="entry name" value="Phenylalanyl-trna Synthetase, Chain B, domain 3"/>
    <property type="match status" value="1"/>
</dbReference>
<dbReference type="HAMAP" id="MF_00283">
    <property type="entry name" value="Phe_tRNA_synth_beta1"/>
    <property type="match status" value="1"/>
</dbReference>
<dbReference type="InterPro" id="IPR045864">
    <property type="entry name" value="aa-tRNA-synth_II/BPL/LPL"/>
</dbReference>
<dbReference type="InterPro" id="IPR005146">
    <property type="entry name" value="B3/B4_tRNA-bd"/>
</dbReference>
<dbReference type="InterPro" id="IPR009061">
    <property type="entry name" value="DNA-bd_dom_put_sf"/>
</dbReference>
<dbReference type="InterPro" id="IPR005121">
    <property type="entry name" value="Fdx_antiC-bd"/>
</dbReference>
<dbReference type="InterPro" id="IPR036690">
    <property type="entry name" value="Fdx_antiC-bd_sf"/>
</dbReference>
<dbReference type="InterPro" id="IPR012340">
    <property type="entry name" value="NA-bd_OB-fold"/>
</dbReference>
<dbReference type="InterPro" id="IPR045060">
    <property type="entry name" value="Phe-tRNA-ligase_IIc_bsu"/>
</dbReference>
<dbReference type="InterPro" id="IPR004532">
    <property type="entry name" value="Phe-tRNA-ligase_IIc_bsu_bact"/>
</dbReference>
<dbReference type="InterPro" id="IPR020825">
    <property type="entry name" value="Phe-tRNA_synthase-like_B3/B4"/>
</dbReference>
<dbReference type="InterPro" id="IPR041616">
    <property type="entry name" value="PheRS_beta_core"/>
</dbReference>
<dbReference type="InterPro" id="IPR002547">
    <property type="entry name" value="tRNA-bd_dom"/>
</dbReference>
<dbReference type="InterPro" id="IPR033714">
    <property type="entry name" value="tRNA_bind_bactPheRS"/>
</dbReference>
<dbReference type="InterPro" id="IPR005147">
    <property type="entry name" value="tRNA_synthase_B5-dom"/>
</dbReference>
<dbReference type="NCBIfam" id="TIGR00472">
    <property type="entry name" value="pheT_bact"/>
    <property type="match status" value="1"/>
</dbReference>
<dbReference type="NCBIfam" id="NF045760">
    <property type="entry name" value="YtpR"/>
    <property type="match status" value="1"/>
</dbReference>
<dbReference type="PANTHER" id="PTHR10947:SF0">
    <property type="entry name" value="PHENYLALANINE--TRNA LIGASE BETA SUBUNIT"/>
    <property type="match status" value="1"/>
</dbReference>
<dbReference type="PANTHER" id="PTHR10947">
    <property type="entry name" value="PHENYLALANYL-TRNA SYNTHETASE BETA CHAIN AND LEUCINE-RICH REPEAT-CONTAINING PROTEIN 47"/>
    <property type="match status" value="1"/>
</dbReference>
<dbReference type="Pfam" id="PF03483">
    <property type="entry name" value="B3_4"/>
    <property type="match status" value="1"/>
</dbReference>
<dbReference type="Pfam" id="PF03484">
    <property type="entry name" value="B5"/>
    <property type="match status" value="1"/>
</dbReference>
<dbReference type="Pfam" id="PF03147">
    <property type="entry name" value="FDX-ACB"/>
    <property type="match status" value="1"/>
</dbReference>
<dbReference type="Pfam" id="PF01588">
    <property type="entry name" value="tRNA_bind"/>
    <property type="match status" value="1"/>
</dbReference>
<dbReference type="Pfam" id="PF17759">
    <property type="entry name" value="tRNA_synthFbeta"/>
    <property type="match status" value="1"/>
</dbReference>
<dbReference type="SMART" id="SM00873">
    <property type="entry name" value="B3_4"/>
    <property type="match status" value="1"/>
</dbReference>
<dbReference type="SMART" id="SM00874">
    <property type="entry name" value="B5"/>
    <property type="match status" value="1"/>
</dbReference>
<dbReference type="SMART" id="SM00896">
    <property type="entry name" value="FDX-ACB"/>
    <property type="match status" value="1"/>
</dbReference>
<dbReference type="SUPFAM" id="SSF54991">
    <property type="entry name" value="Anticodon-binding domain of PheRS"/>
    <property type="match status" value="1"/>
</dbReference>
<dbReference type="SUPFAM" id="SSF55681">
    <property type="entry name" value="Class II aaRS and biotin synthetases"/>
    <property type="match status" value="1"/>
</dbReference>
<dbReference type="SUPFAM" id="SSF50249">
    <property type="entry name" value="Nucleic acid-binding proteins"/>
    <property type="match status" value="1"/>
</dbReference>
<dbReference type="SUPFAM" id="SSF56037">
    <property type="entry name" value="PheT/TilS domain"/>
    <property type="match status" value="1"/>
</dbReference>
<dbReference type="SUPFAM" id="SSF46955">
    <property type="entry name" value="Putative DNA-binding domain"/>
    <property type="match status" value="1"/>
</dbReference>
<dbReference type="PROSITE" id="PS51483">
    <property type="entry name" value="B5"/>
    <property type="match status" value="1"/>
</dbReference>
<dbReference type="PROSITE" id="PS51447">
    <property type="entry name" value="FDX_ACB"/>
    <property type="match status" value="1"/>
</dbReference>
<dbReference type="PROSITE" id="PS50886">
    <property type="entry name" value="TRBD"/>
    <property type="match status" value="1"/>
</dbReference>
<comment type="catalytic activity">
    <reaction evidence="1">
        <text>tRNA(Phe) + L-phenylalanine + ATP = L-phenylalanyl-tRNA(Phe) + AMP + diphosphate + H(+)</text>
        <dbReference type="Rhea" id="RHEA:19413"/>
        <dbReference type="Rhea" id="RHEA-COMP:9668"/>
        <dbReference type="Rhea" id="RHEA-COMP:9699"/>
        <dbReference type="ChEBI" id="CHEBI:15378"/>
        <dbReference type="ChEBI" id="CHEBI:30616"/>
        <dbReference type="ChEBI" id="CHEBI:33019"/>
        <dbReference type="ChEBI" id="CHEBI:58095"/>
        <dbReference type="ChEBI" id="CHEBI:78442"/>
        <dbReference type="ChEBI" id="CHEBI:78531"/>
        <dbReference type="ChEBI" id="CHEBI:456215"/>
        <dbReference type="EC" id="6.1.1.20"/>
    </reaction>
</comment>
<comment type="cofactor">
    <cofactor evidence="1">
        <name>Mg(2+)</name>
        <dbReference type="ChEBI" id="CHEBI:18420"/>
    </cofactor>
    <text evidence="1">Binds 2 magnesium ions per tetramer.</text>
</comment>
<comment type="subunit">
    <text evidence="1">Tetramer of two alpha and two beta subunits.</text>
</comment>
<comment type="subcellular location">
    <subcellularLocation>
        <location evidence="1">Cytoplasm</location>
    </subcellularLocation>
</comment>
<comment type="similarity">
    <text evidence="1">Belongs to the phenylalanyl-tRNA synthetase beta subunit family. Type 1 subfamily.</text>
</comment>
<sequence length="814" mass="87278">MRVSLSWLKQLVQVTDSVEALAHRLSMAGFEEEEIEDLSARAKGVVVGFVKDREKHPNADKLSVCQVDIGSEESIQIVCGAKNVRAGLHVPVAMVGAELPAVNLTIKSGELRGVSSNGMICSLSELGLATESDGIAELDALTDELPALGAPVAPMLGLDDTVLELAITANRPDGLSMVGIAREVAALTGSALTLPVLTLKPAHELLQASAASAEAMQAGGLYGITLIEGVDGSQVSPTWVQQRLERAGINRVNAVVDITNVVMLEQGQPLHAFDADALEQLTGKPVNAASFGLRQAREGEAFIGLDGRELSLVARAQVVTCHDLPIALAGVMGSKASGVTAATGRIWLESAMFSPAAVRTTARSVGLRTDASARFEKGLPKEMTLACSIRALELLKELFPCEAKGLWVCGDSAADASSVLLRRNALHQLLGPIEDEEGSSDLADAVVEQCLTALGSELSPSDEGWNVIAPPSRRLDLAREIDLIEEVARLVGFDRFGAHLPDPLAPGALTPAQQAERRLRTLFCGAGLQEITTLSLVSASDSDPRIAISNPLLAETSHLRTNLWEEHLAVCVRNLKASQPGCWIFELGTTYAGSADAVEESRLLSGVICGEQRLERWTTSGKPAPPDYYAARGRLTEVMQALKLDVSDRRLTDDSRLHPGRAATLVLEGRPLGCFGQLHPELAASQNLPEATFLFELDLTRLVESATRRNRWVPAFKAFPTVPASERDLAVVVDRSQAASDLMQSIRKAGKPLLEAVTLIDRFEGDQLGENKASQAFRLRYRHQSETLTDDQVQPVHDKVRNALVKQHGAELRS</sequence>
<reference key="1">
    <citation type="journal article" date="2003" name="Nature">
        <title>The genome of a motile marine Synechococcus.</title>
        <authorList>
            <person name="Palenik B."/>
            <person name="Brahamsha B."/>
            <person name="Larimer F.W."/>
            <person name="Land M.L."/>
            <person name="Hauser L."/>
            <person name="Chain P."/>
            <person name="Lamerdin J.E."/>
            <person name="Regala W."/>
            <person name="Allen E.E."/>
            <person name="McCarren J."/>
            <person name="Paulsen I.T."/>
            <person name="Dufresne A."/>
            <person name="Partensky F."/>
            <person name="Webb E.A."/>
            <person name="Waterbury J."/>
        </authorList>
    </citation>
    <scope>NUCLEOTIDE SEQUENCE [LARGE SCALE GENOMIC DNA]</scope>
    <source>
        <strain>WH8102</strain>
    </source>
</reference>
<organism>
    <name type="scientific">Parasynechococcus marenigrum (strain WH8102)</name>
    <dbReference type="NCBI Taxonomy" id="84588"/>
    <lineage>
        <taxon>Bacteria</taxon>
        <taxon>Bacillati</taxon>
        <taxon>Cyanobacteriota</taxon>
        <taxon>Cyanophyceae</taxon>
        <taxon>Synechococcales</taxon>
        <taxon>Prochlorococcaceae</taxon>
        <taxon>Parasynechococcus</taxon>
        <taxon>Parasynechococcus marenigrum</taxon>
    </lineage>
</organism>
<keyword id="KW-0030">Aminoacyl-tRNA synthetase</keyword>
<keyword id="KW-0067">ATP-binding</keyword>
<keyword id="KW-0963">Cytoplasm</keyword>
<keyword id="KW-0436">Ligase</keyword>
<keyword id="KW-0460">Magnesium</keyword>
<keyword id="KW-0479">Metal-binding</keyword>
<keyword id="KW-0547">Nucleotide-binding</keyword>
<keyword id="KW-0648">Protein biosynthesis</keyword>
<keyword id="KW-0694">RNA-binding</keyword>
<keyword id="KW-0820">tRNA-binding</keyword>
<evidence type="ECO:0000255" key="1">
    <source>
        <dbReference type="HAMAP-Rule" id="MF_00283"/>
    </source>
</evidence>
<feature type="chain" id="PRO_0000126973" description="Phenylalanine--tRNA ligase beta subunit">
    <location>
        <begin position="1"/>
        <end position="814"/>
    </location>
</feature>
<feature type="domain" description="tRNA-binding" evidence="1">
    <location>
        <begin position="39"/>
        <end position="153"/>
    </location>
</feature>
<feature type="domain" description="B5" evidence="1">
    <location>
        <begin position="414"/>
        <end position="498"/>
    </location>
</feature>
<feature type="domain" description="FDX-ACB" evidence="1">
    <location>
        <begin position="720"/>
        <end position="813"/>
    </location>
</feature>
<feature type="binding site" evidence="1">
    <location>
        <position position="476"/>
    </location>
    <ligand>
        <name>Mg(2+)</name>
        <dbReference type="ChEBI" id="CHEBI:18420"/>
        <note>shared with alpha subunit</note>
    </ligand>
</feature>
<feature type="binding site" evidence="1">
    <location>
        <position position="482"/>
    </location>
    <ligand>
        <name>Mg(2+)</name>
        <dbReference type="ChEBI" id="CHEBI:18420"/>
        <note>shared with alpha subunit</note>
    </ligand>
</feature>
<feature type="binding site" evidence="1">
    <location>
        <position position="485"/>
    </location>
    <ligand>
        <name>Mg(2+)</name>
        <dbReference type="ChEBI" id="CHEBI:18420"/>
        <note>shared with alpha subunit</note>
    </ligand>
</feature>
<feature type="binding site" evidence="1">
    <location>
        <position position="486"/>
    </location>
    <ligand>
        <name>Mg(2+)</name>
        <dbReference type="ChEBI" id="CHEBI:18420"/>
        <note>shared with alpha subunit</note>
    </ligand>
</feature>
<protein>
    <recommendedName>
        <fullName evidence="1">Phenylalanine--tRNA ligase beta subunit</fullName>
        <ecNumber evidence="1">6.1.1.20</ecNumber>
    </recommendedName>
    <alternativeName>
        <fullName evidence="1">Phenylalanyl-tRNA synthetase beta subunit</fullName>
        <shortName evidence="1">PheRS</shortName>
    </alternativeName>
</protein>